<feature type="chain" id="PRO_0000204418" description="Malonyl-[acyl-carrier protein] O-methyltransferase">
    <location>
        <begin position="1"/>
        <end position="260"/>
    </location>
</feature>
<reference key="1">
    <citation type="journal article" date="1995" name="Science">
        <title>Whole-genome random sequencing and assembly of Haemophilus influenzae Rd.</title>
        <authorList>
            <person name="Fleischmann R.D."/>
            <person name="Adams M.D."/>
            <person name="White O."/>
            <person name="Clayton R.A."/>
            <person name="Kirkness E.F."/>
            <person name="Kerlavage A.R."/>
            <person name="Bult C.J."/>
            <person name="Tomb J.-F."/>
            <person name="Dougherty B.A."/>
            <person name="Merrick J.M."/>
            <person name="McKenney K."/>
            <person name="Sutton G.G."/>
            <person name="FitzHugh W."/>
            <person name="Fields C.A."/>
            <person name="Gocayne J.D."/>
            <person name="Scott J.D."/>
            <person name="Shirley R."/>
            <person name="Liu L.-I."/>
            <person name="Glodek A."/>
            <person name="Kelley J.M."/>
            <person name="Weidman J.F."/>
            <person name="Phillips C.A."/>
            <person name="Spriggs T."/>
            <person name="Hedblom E."/>
            <person name="Cotton M.D."/>
            <person name="Utterback T.R."/>
            <person name="Hanna M.C."/>
            <person name="Nguyen D.T."/>
            <person name="Saudek D.M."/>
            <person name="Brandon R.C."/>
            <person name="Fine L.D."/>
            <person name="Fritchman J.L."/>
            <person name="Fuhrmann J.L."/>
            <person name="Geoghagen N.S.M."/>
            <person name="Gnehm C.L."/>
            <person name="McDonald L.A."/>
            <person name="Small K.V."/>
            <person name="Fraser C.M."/>
            <person name="Smith H.O."/>
            <person name="Venter J.C."/>
        </authorList>
    </citation>
    <scope>NUCLEOTIDE SEQUENCE [LARGE SCALE GENOMIC DNA]</scope>
    <source>
        <strain>ATCC 51907 / DSM 11121 / KW20 / Rd</strain>
    </source>
</reference>
<evidence type="ECO:0000255" key="1">
    <source>
        <dbReference type="HAMAP-Rule" id="MF_00835"/>
    </source>
</evidence>
<accession>P45249</accession>
<protein>
    <recommendedName>
        <fullName evidence="1">Malonyl-[acyl-carrier protein] O-methyltransferase</fullName>
        <shortName evidence="1">Malonyl-ACP O-methyltransferase</shortName>
        <ecNumber evidence="1">2.1.1.197</ecNumber>
    </recommendedName>
    <alternativeName>
        <fullName evidence="1">Biotin synthesis protein BioC</fullName>
    </alternativeName>
</protein>
<gene>
    <name evidence="1" type="primary">bioC</name>
    <name type="ordered locus">HI_1551</name>
</gene>
<sequence>MGSLTSVDKSRIRQAFQKALNDYDRHALIQQKMTINLMAHLQDYLPNGSLDSVLELGCGSGMLSSLLQKQISADYWLFNDLCDVQTQLAEKLPQSFDFYCGDAEHFLFLQQFDLIASASAVQWFHQPDAFIAHCKTGLKTNGLLAVATFGEDNLKEVRQITNIGLNYPTLSQWQTWLAKDFELLWCEDFKVILDFDTPLDVLKHLKYTGVTATNQKNWTRKNLNGFIGDYLSAFGMPSGKVRLTYHPLFFIARYSHIENQ</sequence>
<proteinExistence type="inferred from homology"/>
<comment type="function">
    <text evidence="1">Converts the free carboxyl group of a malonyl-thioester to its methyl ester by transfer of a methyl group from S-adenosyl-L-methionine (SAM). It allows to synthesize pimeloyl-ACP via the fatty acid synthetic pathway.</text>
</comment>
<comment type="catalytic activity">
    <reaction evidence="1">
        <text>malonyl-[ACP] + S-adenosyl-L-methionine = malonyl-[ACP] methyl ester + S-adenosyl-L-homocysteine</text>
        <dbReference type="Rhea" id="RHEA:17105"/>
        <dbReference type="Rhea" id="RHEA-COMP:9623"/>
        <dbReference type="Rhea" id="RHEA-COMP:9954"/>
        <dbReference type="ChEBI" id="CHEBI:57856"/>
        <dbReference type="ChEBI" id="CHEBI:59789"/>
        <dbReference type="ChEBI" id="CHEBI:78449"/>
        <dbReference type="ChEBI" id="CHEBI:78845"/>
        <dbReference type="EC" id="2.1.1.197"/>
    </reaction>
</comment>
<comment type="pathway">
    <text evidence="1">Cofactor biosynthesis; biotin biosynthesis.</text>
</comment>
<comment type="similarity">
    <text evidence="1">Belongs to the methyltransferase superfamily.</text>
</comment>
<organism>
    <name type="scientific">Haemophilus influenzae (strain ATCC 51907 / DSM 11121 / KW20 / Rd)</name>
    <dbReference type="NCBI Taxonomy" id="71421"/>
    <lineage>
        <taxon>Bacteria</taxon>
        <taxon>Pseudomonadati</taxon>
        <taxon>Pseudomonadota</taxon>
        <taxon>Gammaproteobacteria</taxon>
        <taxon>Pasteurellales</taxon>
        <taxon>Pasteurellaceae</taxon>
        <taxon>Haemophilus</taxon>
    </lineage>
</organism>
<keyword id="KW-0093">Biotin biosynthesis</keyword>
<keyword id="KW-0489">Methyltransferase</keyword>
<keyword id="KW-1185">Reference proteome</keyword>
<keyword id="KW-0949">S-adenosyl-L-methionine</keyword>
<keyword id="KW-0808">Transferase</keyword>
<name>BIOC_HAEIN</name>
<dbReference type="EC" id="2.1.1.197" evidence="1"/>
<dbReference type="EMBL" id="L42023">
    <property type="protein sequence ID" value="AAC23201.1"/>
    <property type="molecule type" value="Genomic_DNA"/>
</dbReference>
<dbReference type="PIR" id="C64129">
    <property type="entry name" value="C64129"/>
</dbReference>
<dbReference type="RefSeq" id="NP_439700.1">
    <property type="nucleotide sequence ID" value="NC_000907.1"/>
</dbReference>
<dbReference type="SMR" id="P45249"/>
<dbReference type="STRING" id="71421.HI_1551"/>
<dbReference type="DNASU" id="950415"/>
<dbReference type="EnsemblBacteria" id="AAC23201">
    <property type="protein sequence ID" value="AAC23201"/>
    <property type="gene ID" value="HI_1551"/>
</dbReference>
<dbReference type="KEGG" id="hin:HI_1551"/>
<dbReference type="PATRIC" id="fig|71421.8.peg.1622"/>
<dbReference type="eggNOG" id="COG0500">
    <property type="taxonomic scope" value="Bacteria"/>
</dbReference>
<dbReference type="HOGENOM" id="CLU_046586_1_0_6"/>
<dbReference type="OrthoDB" id="9760689at2"/>
<dbReference type="BioCyc" id="HINF71421:G1GJ1-1571-MONOMER"/>
<dbReference type="UniPathway" id="UPA00078"/>
<dbReference type="Proteomes" id="UP000000579">
    <property type="component" value="Chromosome"/>
</dbReference>
<dbReference type="GO" id="GO:0010340">
    <property type="term" value="F:carboxyl-O-methyltransferase activity"/>
    <property type="evidence" value="ECO:0007669"/>
    <property type="project" value="UniProtKB-UniRule"/>
</dbReference>
<dbReference type="GO" id="GO:0102130">
    <property type="term" value="F:malonyl-CoA methyltransferase activity"/>
    <property type="evidence" value="ECO:0007669"/>
    <property type="project" value="UniProtKB-EC"/>
</dbReference>
<dbReference type="GO" id="GO:0008168">
    <property type="term" value="F:methyltransferase activity"/>
    <property type="evidence" value="ECO:0000318"/>
    <property type="project" value="GO_Central"/>
</dbReference>
<dbReference type="GO" id="GO:0009102">
    <property type="term" value="P:biotin biosynthetic process"/>
    <property type="evidence" value="ECO:0007669"/>
    <property type="project" value="UniProtKB-UniRule"/>
</dbReference>
<dbReference type="GO" id="GO:0032259">
    <property type="term" value="P:methylation"/>
    <property type="evidence" value="ECO:0007669"/>
    <property type="project" value="UniProtKB-KW"/>
</dbReference>
<dbReference type="CDD" id="cd02440">
    <property type="entry name" value="AdoMet_MTases"/>
    <property type="match status" value="1"/>
</dbReference>
<dbReference type="Gene3D" id="3.40.50.150">
    <property type="entry name" value="Vaccinia Virus protein VP39"/>
    <property type="match status" value="1"/>
</dbReference>
<dbReference type="HAMAP" id="MF_00835">
    <property type="entry name" value="BioC"/>
    <property type="match status" value="1"/>
</dbReference>
<dbReference type="InterPro" id="IPR011814">
    <property type="entry name" value="BioC"/>
</dbReference>
<dbReference type="InterPro" id="IPR050602">
    <property type="entry name" value="Malonyl-ACP_OMT"/>
</dbReference>
<dbReference type="InterPro" id="IPR041698">
    <property type="entry name" value="Methyltransf_25"/>
</dbReference>
<dbReference type="InterPro" id="IPR029063">
    <property type="entry name" value="SAM-dependent_MTases_sf"/>
</dbReference>
<dbReference type="NCBIfam" id="TIGR02072">
    <property type="entry name" value="BioC"/>
    <property type="match status" value="1"/>
</dbReference>
<dbReference type="PANTHER" id="PTHR13090">
    <property type="entry name" value="ARGININE-HYDROXYLASE NDUFAF5, MITOCHONDRIAL"/>
    <property type="match status" value="1"/>
</dbReference>
<dbReference type="PANTHER" id="PTHR13090:SF1">
    <property type="entry name" value="ARGININE-HYDROXYLASE NDUFAF5, MITOCHONDRIAL"/>
    <property type="match status" value="1"/>
</dbReference>
<dbReference type="Pfam" id="PF13649">
    <property type="entry name" value="Methyltransf_25"/>
    <property type="match status" value="1"/>
</dbReference>
<dbReference type="SUPFAM" id="SSF53335">
    <property type="entry name" value="S-adenosyl-L-methionine-dependent methyltransferases"/>
    <property type="match status" value="1"/>
</dbReference>